<proteinExistence type="inferred from homology"/>
<comment type="function">
    <text evidence="1">Catalyzes a salvage reaction resulting in the formation of IMP that is energically less costly than de novo synthesis.</text>
</comment>
<comment type="catalytic activity">
    <reaction evidence="1">
        <text>IMP + diphosphate = hypoxanthine + 5-phospho-alpha-D-ribose 1-diphosphate</text>
        <dbReference type="Rhea" id="RHEA:17973"/>
        <dbReference type="ChEBI" id="CHEBI:17368"/>
        <dbReference type="ChEBI" id="CHEBI:33019"/>
        <dbReference type="ChEBI" id="CHEBI:58017"/>
        <dbReference type="ChEBI" id="CHEBI:58053"/>
        <dbReference type="EC" id="2.4.2.8"/>
    </reaction>
</comment>
<comment type="catalytic activity">
    <reaction evidence="1">
        <text>GMP + diphosphate = guanine + 5-phospho-alpha-D-ribose 1-diphosphate</text>
        <dbReference type="Rhea" id="RHEA:25424"/>
        <dbReference type="ChEBI" id="CHEBI:16235"/>
        <dbReference type="ChEBI" id="CHEBI:33019"/>
        <dbReference type="ChEBI" id="CHEBI:58017"/>
        <dbReference type="ChEBI" id="CHEBI:58115"/>
        <dbReference type="EC" id="2.4.2.8"/>
    </reaction>
</comment>
<comment type="pathway">
    <text evidence="1">Purine metabolism; IMP biosynthesis via salvage pathway; IMP from hypoxanthine: step 1/1.</text>
</comment>
<comment type="subunit">
    <text evidence="1">Homodimer.</text>
</comment>
<comment type="subcellular location">
    <subcellularLocation>
        <location evidence="1">Cytoplasm</location>
    </subcellularLocation>
</comment>
<comment type="similarity">
    <text evidence="1">Belongs to the purine/pyrimidine phosphoribosyltransferase family. Archaeal HPRT subfamily.</text>
</comment>
<accession>F7XQS2</accession>
<gene>
    <name evidence="1" type="primary">hpt</name>
    <name type="ordered locus">Mzhil_1841</name>
</gene>
<evidence type="ECO:0000255" key="1">
    <source>
        <dbReference type="HAMAP-Rule" id="MF_01467"/>
    </source>
</evidence>
<organism>
    <name type="scientific">Methanosalsum zhilinae (strain DSM 4017 / NBRC 107636 / OCM 62 / WeN5)</name>
    <name type="common">Methanohalophilus zhilinae</name>
    <dbReference type="NCBI Taxonomy" id="679901"/>
    <lineage>
        <taxon>Archaea</taxon>
        <taxon>Methanobacteriati</taxon>
        <taxon>Methanobacteriota</taxon>
        <taxon>Stenosarchaea group</taxon>
        <taxon>Methanomicrobia</taxon>
        <taxon>Methanosarcinales</taxon>
        <taxon>Methanosarcinaceae</taxon>
        <taxon>Methanosalsum</taxon>
    </lineage>
</organism>
<protein>
    <recommendedName>
        <fullName evidence="1">Hypoxanthine/guanine phosphoribosyltransferase</fullName>
        <shortName evidence="1">HGPRTase</shortName>
        <ecNumber evidence="1">2.4.2.8</ecNumber>
    </recommendedName>
</protein>
<name>HPRT_METZD</name>
<reference key="1">
    <citation type="submission" date="2010-07" db="EMBL/GenBank/DDBJ databases">
        <title>The complete genome of Methanosalsum zhilinae DSM 4017.</title>
        <authorList>
            <person name="Lucas S."/>
            <person name="Copeland A."/>
            <person name="Lapidus A."/>
            <person name="Glavina del Rio T."/>
            <person name="Dalin E."/>
            <person name="Tice H."/>
            <person name="Bruce D."/>
            <person name="Goodwin L."/>
            <person name="Pitluck S."/>
            <person name="Kyrpides N."/>
            <person name="Mavromatis K."/>
            <person name="Ovchinnikova G."/>
            <person name="Daligault H."/>
            <person name="Detter J.C."/>
            <person name="Han C."/>
            <person name="Tapia R."/>
            <person name="Larimer F."/>
            <person name="Land M."/>
            <person name="Hauser L."/>
            <person name="Markowitz V."/>
            <person name="Cheng J.-F."/>
            <person name="Hugenholtz P."/>
            <person name="Woyke T."/>
            <person name="Wu D."/>
            <person name="Spring S."/>
            <person name="Schueler E."/>
            <person name="Brambilla E."/>
            <person name="Klenk H.-P."/>
            <person name="Eisen J.A."/>
        </authorList>
    </citation>
    <scope>NUCLEOTIDE SEQUENCE [LARGE SCALE GENOMIC DNA]</scope>
    <source>
        <strain>DSM 4017 / NBRC 107636 / OCM 62 / WeN5</strain>
    </source>
</reference>
<keyword id="KW-0963">Cytoplasm</keyword>
<keyword id="KW-0328">Glycosyltransferase</keyword>
<keyword id="KW-0660">Purine salvage</keyword>
<keyword id="KW-1185">Reference proteome</keyword>
<keyword id="KW-0808">Transferase</keyword>
<feature type="chain" id="PRO_0000415479" description="Hypoxanthine/guanine phosphoribosyltransferase">
    <location>
        <begin position="1"/>
        <end position="190"/>
    </location>
</feature>
<dbReference type="EC" id="2.4.2.8" evidence="1"/>
<dbReference type="EMBL" id="CP002101">
    <property type="protein sequence ID" value="AEH61676.1"/>
    <property type="molecule type" value="Genomic_DNA"/>
</dbReference>
<dbReference type="RefSeq" id="WP_013899112.1">
    <property type="nucleotide sequence ID" value="NC_015676.1"/>
</dbReference>
<dbReference type="SMR" id="F7XQS2"/>
<dbReference type="STRING" id="679901.Mzhil_1841"/>
<dbReference type="GeneID" id="10823485"/>
<dbReference type="KEGG" id="mzh:Mzhil_1841"/>
<dbReference type="HOGENOM" id="CLU_126376_0_0_2"/>
<dbReference type="OrthoDB" id="8323at2157"/>
<dbReference type="UniPathway" id="UPA00591">
    <property type="reaction ID" value="UER00648"/>
</dbReference>
<dbReference type="Proteomes" id="UP000006622">
    <property type="component" value="Chromosome"/>
</dbReference>
<dbReference type="GO" id="GO:0005737">
    <property type="term" value="C:cytoplasm"/>
    <property type="evidence" value="ECO:0007669"/>
    <property type="project" value="UniProtKB-SubCell"/>
</dbReference>
<dbReference type="GO" id="GO:0052657">
    <property type="term" value="F:guanine phosphoribosyltransferase activity"/>
    <property type="evidence" value="ECO:0007669"/>
    <property type="project" value="RHEA"/>
</dbReference>
<dbReference type="GO" id="GO:0004422">
    <property type="term" value="F:hypoxanthine phosphoribosyltransferase activity"/>
    <property type="evidence" value="ECO:0007669"/>
    <property type="project" value="UniProtKB-UniRule"/>
</dbReference>
<dbReference type="GO" id="GO:0032264">
    <property type="term" value="P:IMP salvage"/>
    <property type="evidence" value="ECO:0007669"/>
    <property type="project" value="UniProtKB-UniRule"/>
</dbReference>
<dbReference type="GO" id="GO:0006166">
    <property type="term" value="P:purine ribonucleoside salvage"/>
    <property type="evidence" value="ECO:0007669"/>
    <property type="project" value="UniProtKB-KW"/>
</dbReference>
<dbReference type="CDD" id="cd06223">
    <property type="entry name" value="PRTases_typeI"/>
    <property type="match status" value="1"/>
</dbReference>
<dbReference type="Gene3D" id="3.40.50.2020">
    <property type="match status" value="1"/>
</dbReference>
<dbReference type="HAMAP" id="MF_01467">
    <property type="entry name" value="Hypx_phosphoribosyltr"/>
    <property type="match status" value="1"/>
</dbReference>
<dbReference type="InterPro" id="IPR026597">
    <property type="entry name" value="HGPRTase-like"/>
</dbReference>
<dbReference type="InterPro" id="IPR000836">
    <property type="entry name" value="PRibTrfase_dom"/>
</dbReference>
<dbReference type="InterPro" id="IPR029057">
    <property type="entry name" value="PRTase-like"/>
</dbReference>
<dbReference type="InterPro" id="IPR050118">
    <property type="entry name" value="Pur/Pyrimidine_PRTase"/>
</dbReference>
<dbReference type="NCBIfam" id="NF040646">
    <property type="entry name" value="HPT_Archaea"/>
    <property type="match status" value="1"/>
</dbReference>
<dbReference type="NCBIfam" id="NF002635">
    <property type="entry name" value="PRK02304.1-4"/>
    <property type="match status" value="1"/>
</dbReference>
<dbReference type="PANTHER" id="PTHR43864">
    <property type="entry name" value="HYPOXANTHINE/GUANINE PHOSPHORIBOSYLTRANSFERASE"/>
    <property type="match status" value="1"/>
</dbReference>
<dbReference type="PANTHER" id="PTHR43864:SF1">
    <property type="entry name" value="XANTHINE PHOSPHORIBOSYLTRANSFERASE"/>
    <property type="match status" value="1"/>
</dbReference>
<dbReference type="Pfam" id="PF00156">
    <property type="entry name" value="Pribosyltran"/>
    <property type="match status" value="1"/>
</dbReference>
<dbReference type="SUPFAM" id="SSF53271">
    <property type="entry name" value="PRTase-like"/>
    <property type="match status" value="1"/>
</dbReference>
<dbReference type="PROSITE" id="PS00103">
    <property type="entry name" value="PUR_PYR_PR_TRANSFER"/>
    <property type="match status" value="1"/>
</dbReference>
<sequence>MLEQLYDSLVNAPVVKRGDYSYFIHPVSDGVPLLEPSLLEEISECILCYADMDVDRIVTVEAMGIPVATCLSLKTGIPLSIVRKRKYDLAGEIELSQSTGYSKGKLYVNGISEGDRVLIVDDVISTGGTLLVLVKALEDAGIKISDVVAVIERGTGSNDLRDAGIDVKTLVRVEVDDDRVVVEEVYSDNE</sequence>